<proteinExistence type="inferred from homology"/>
<gene>
    <name evidence="1" type="primary">tam</name>
    <name type="ordered locus">Vapar_1433</name>
</gene>
<comment type="function">
    <text evidence="1">Catalyzes the S-adenosylmethionine monomethyl esterification of trans-aconitate.</text>
</comment>
<comment type="catalytic activity">
    <reaction evidence="1">
        <text>trans-aconitate + S-adenosyl-L-methionine = (E)-3-(methoxycarbonyl)pent-2-enedioate + S-adenosyl-L-homocysteine</text>
        <dbReference type="Rhea" id="RHEA:14969"/>
        <dbReference type="ChEBI" id="CHEBI:15708"/>
        <dbReference type="ChEBI" id="CHEBI:57470"/>
        <dbReference type="ChEBI" id="CHEBI:57856"/>
        <dbReference type="ChEBI" id="CHEBI:59789"/>
        <dbReference type="EC" id="2.1.1.144"/>
    </reaction>
</comment>
<comment type="subcellular location">
    <subcellularLocation>
        <location evidence="1">Cytoplasm</location>
    </subcellularLocation>
</comment>
<comment type="similarity">
    <text evidence="1">Belongs to the methyltransferase superfamily. Tam family.</text>
</comment>
<dbReference type="EC" id="2.1.1.144" evidence="1"/>
<dbReference type="EMBL" id="CP001635">
    <property type="protein sequence ID" value="ACS18084.1"/>
    <property type="molecule type" value="Genomic_DNA"/>
</dbReference>
<dbReference type="SMR" id="C5CSI6"/>
<dbReference type="STRING" id="543728.Vapar_1433"/>
<dbReference type="KEGG" id="vap:Vapar_1433"/>
<dbReference type="eggNOG" id="COG4106">
    <property type="taxonomic scope" value="Bacteria"/>
</dbReference>
<dbReference type="HOGENOM" id="CLU_037990_5_2_4"/>
<dbReference type="OrthoDB" id="9795085at2"/>
<dbReference type="GO" id="GO:0005737">
    <property type="term" value="C:cytoplasm"/>
    <property type="evidence" value="ECO:0007669"/>
    <property type="project" value="UniProtKB-SubCell"/>
</dbReference>
<dbReference type="GO" id="GO:0030798">
    <property type="term" value="F:trans-aconitate 2-methyltransferase activity"/>
    <property type="evidence" value="ECO:0007669"/>
    <property type="project" value="UniProtKB-UniRule"/>
</dbReference>
<dbReference type="GO" id="GO:0032259">
    <property type="term" value="P:methylation"/>
    <property type="evidence" value="ECO:0007669"/>
    <property type="project" value="UniProtKB-KW"/>
</dbReference>
<dbReference type="CDD" id="cd02440">
    <property type="entry name" value="AdoMet_MTases"/>
    <property type="match status" value="1"/>
</dbReference>
<dbReference type="Gene3D" id="1.10.150.290">
    <property type="entry name" value="S-adenosyl-L-methionine-dependent methyltransferases"/>
    <property type="match status" value="1"/>
</dbReference>
<dbReference type="Gene3D" id="3.40.50.150">
    <property type="entry name" value="Vaccinia Virus protein VP39"/>
    <property type="match status" value="1"/>
</dbReference>
<dbReference type="HAMAP" id="MF_00560">
    <property type="entry name" value="Tran_acon_Me_trans"/>
    <property type="match status" value="1"/>
</dbReference>
<dbReference type="InterPro" id="IPR041698">
    <property type="entry name" value="Methyltransf_25"/>
</dbReference>
<dbReference type="InterPro" id="IPR029063">
    <property type="entry name" value="SAM-dependent_MTases_sf"/>
</dbReference>
<dbReference type="InterPro" id="IPR023506">
    <property type="entry name" value="Trans-aconitate_MeTrfase"/>
</dbReference>
<dbReference type="InterPro" id="IPR023149">
    <property type="entry name" value="Trans_acon_MeTrfase_C"/>
</dbReference>
<dbReference type="NCBIfam" id="NF002463">
    <property type="entry name" value="PRK01683.1"/>
    <property type="match status" value="1"/>
</dbReference>
<dbReference type="PANTHER" id="PTHR43861:SF1">
    <property type="entry name" value="TRANS-ACONITATE 2-METHYLTRANSFERASE"/>
    <property type="match status" value="1"/>
</dbReference>
<dbReference type="PANTHER" id="PTHR43861">
    <property type="entry name" value="TRANS-ACONITATE 2-METHYLTRANSFERASE-RELATED"/>
    <property type="match status" value="1"/>
</dbReference>
<dbReference type="Pfam" id="PF13649">
    <property type="entry name" value="Methyltransf_25"/>
    <property type="match status" value="1"/>
</dbReference>
<dbReference type="SUPFAM" id="SSF53335">
    <property type="entry name" value="S-adenosyl-L-methionine-dependent methyltransferases"/>
    <property type="match status" value="1"/>
</dbReference>
<evidence type="ECO:0000255" key="1">
    <source>
        <dbReference type="HAMAP-Rule" id="MF_00560"/>
    </source>
</evidence>
<sequence>MLDWNPALYRRYEDERTRPAQELLARVPLPEAARVVDLGCGPGNSTELLANRFPTAKVVGTDNSEAMLASARERLPQARFELSDIATWAPQDQAPDLIYANAALQWVPDHEQLIPRLFAALAPGGVLAIQMPDNREEPTHRLMRAVAAEAPWAEPIGNADRLRTLLLPLGGYYDLLAPAAARVDVWHTIYQHPMADAAAIVEWVRGTGLKPFVDRLPADLQASYLAEYERRVDQAYPVRTDGKRLLAFPRMFIVAQKKA</sequence>
<keyword id="KW-0963">Cytoplasm</keyword>
<keyword id="KW-0489">Methyltransferase</keyword>
<keyword id="KW-0949">S-adenosyl-L-methionine</keyword>
<keyword id="KW-0808">Transferase</keyword>
<accession>C5CSI6</accession>
<organism>
    <name type="scientific">Variovorax paradoxus (strain S110)</name>
    <dbReference type="NCBI Taxonomy" id="543728"/>
    <lineage>
        <taxon>Bacteria</taxon>
        <taxon>Pseudomonadati</taxon>
        <taxon>Pseudomonadota</taxon>
        <taxon>Betaproteobacteria</taxon>
        <taxon>Burkholderiales</taxon>
        <taxon>Comamonadaceae</taxon>
        <taxon>Variovorax</taxon>
    </lineage>
</organism>
<reference key="1">
    <citation type="journal article" date="2011" name="J. Bacteriol.">
        <title>Complete genome sequence of the metabolically versatile plant growth-promoting endophyte, Variovorax paradoxus S110.</title>
        <authorList>
            <person name="Han J.I."/>
            <person name="Choi H.K."/>
            <person name="Lee S.W."/>
            <person name="Orwin P.M."/>
            <person name="Kim J."/>
            <person name="Laroe S.L."/>
            <person name="Kim T.G."/>
            <person name="O'Neil J."/>
            <person name="Leadbetter J.R."/>
            <person name="Lee S.Y."/>
            <person name="Hur C.G."/>
            <person name="Spain J.C."/>
            <person name="Ovchinnikova G."/>
            <person name="Goodwin L."/>
            <person name="Han C."/>
        </authorList>
    </citation>
    <scope>NUCLEOTIDE SEQUENCE [LARGE SCALE GENOMIC DNA]</scope>
    <source>
        <strain>S110</strain>
    </source>
</reference>
<name>TAM_VARPS</name>
<feature type="chain" id="PRO_1000212043" description="Trans-aconitate 2-methyltransferase">
    <location>
        <begin position="1"/>
        <end position="259"/>
    </location>
</feature>
<protein>
    <recommendedName>
        <fullName evidence="1">Trans-aconitate 2-methyltransferase</fullName>
        <ecNumber evidence="1">2.1.1.144</ecNumber>
    </recommendedName>
</protein>